<comment type="function">
    <text evidence="1 2 10">Acts as a substrate for the production of iodinated thyroid hormones thyroxine (T4) and triiodothyronine (T3) (PubMed:7021557). The synthesis of T3 and T4 involves iodination of selected tyrosine residues of TG/thyroglobulin followed by their oxidative coupling (PubMed:7021557). Following TG re-internalization and lysosomal-mediated proteolysis, T3 and T4 are released from the polypeptide backbone leading to their secretion into the bloodstream (By similarity). One dimer produces 7 thyroid hormone molecules (By similarity).</text>
</comment>
<comment type="subunit">
    <text evidence="1 2">Monomer (By similarity). Homodimer (via ChEL region); occurs in the endoplasmic reticulum and is required for export to the Golgi apparatus (By similarity). Homooligomer; disulfide-linked; stored in this form in the thyroid follicle lumen (By similarity).</text>
</comment>
<comment type="subcellular location">
    <subcellularLocation>
        <location evidence="9">Secreted</location>
    </subcellularLocation>
    <text evidence="2 9">Secreted into the follicular lumina of the thyroid (PubMed:12387814). Localizes to colloid globules, a structure formed in the thyroid follicle lumen consisting of cross-linked TG arranged in concentric layers (By similarity).</text>
</comment>
<comment type="tissue specificity">
    <text evidence="9">Expressed in thyroid epithelial cells.</text>
</comment>
<comment type="domain">
    <text evidence="1">The cholinesterase-like (ChEL) region is required for dimerization and export from the endoplasmic reticulum.</text>
</comment>
<comment type="PTM">
    <text evidence="2 8">Iodinated on tyrosine residues by TPO (PubMed:12325367). There are 4 pairs of iodinated tyrosines used for coupling: acceptor Tyr-24 is coupled to donor Tyr-149 or Tyr-234, acceptor Tyr-2500 is coupled to donor Tyr-2467, acceptor Tyr-2690 in monomer 1 is coupled to donor Tyr-2690 in monomer 2 and acceptor Tyr-1241 in monomer 1 is coupled to donor Tyr-108 in monomer 2 (By similarity).</text>
</comment>
<comment type="PTM">
    <text evidence="2">Sulfated tyrosines are desulfated during iodination.</text>
</comment>
<comment type="PTM">
    <text evidence="1 7">Undergoes sequential proteolysis by cathepsins to release thyroxine (T4) and triiodothyronine (T3) hormones (By similarity). In the thyroid follicle lumen, cross-linked TG (storage form) is solubilized by limited proteolysis mediated by cathepsins CTSB and/or CTSL (By similarity). Partially cleaved TG is further processed by CTSK/cathepsin K and/or CTSL resulting in the release of T4 (PubMed:11082042). Following endocytosis, further processing occurs leading to the release of T3 and more T4 hormones (By similarity).</text>
</comment>
<comment type="similarity">
    <text evidence="11">Belongs to the type-B carboxylesterase/lipase family.</text>
</comment>
<comment type="caution">
    <text evidence="11">The cholinesterase-like (ChEL) region lacks the Ser residue of the catalytic triad suggesting that it has no esterase activity.</text>
</comment>
<name>THYG_PIG</name>
<keyword id="KW-0903">Direct protein sequencing</keyword>
<keyword id="KW-1015">Disulfide bond</keyword>
<keyword id="KW-0325">Glycoprotein</keyword>
<keyword id="KW-0372">Hormone</keyword>
<keyword id="KW-0405">Iodination</keyword>
<keyword id="KW-1185">Reference proteome</keyword>
<keyword id="KW-0677">Repeat</keyword>
<keyword id="KW-0964">Secreted</keyword>
<keyword id="KW-0732">Signal</keyword>
<keyword id="KW-0765">Sulfation</keyword>
<keyword id="KW-0795">Thyroid hormone</keyword>
<keyword id="KW-0893">Thyroid hormones biosynthesis</keyword>
<protein>
    <recommendedName>
        <fullName evidence="11">Thyroglobulin</fullName>
    </recommendedName>
</protein>
<gene>
    <name evidence="13" type="primary">TG</name>
</gene>
<proteinExistence type="evidence at protein level"/>
<accession>F1RRV3</accession>
<accession>D1KKB3</accession>
<reference evidence="12" key="1">
    <citation type="submission" date="2009-06" db="EMBL/GenBank/DDBJ databases">
        <authorList>
            <person name="Wang Y."/>
            <person name="Zhao X."/>
            <person name="Xu N."/>
        </authorList>
    </citation>
    <scope>NUCLEOTIDE SEQUENCE [MRNA]</scope>
</reference>
<reference evidence="14" key="2">
    <citation type="submission" date="2009-11" db="EMBL/GenBank/DDBJ databases">
        <authorList>
            <consortium name="Porcine genome sequencing project"/>
        </authorList>
    </citation>
    <scope>NUCLEOTIDE SEQUENCE [LARGE SCALE GENOMIC DNA]</scope>
    <source>
        <strain evidence="14">Duroc</strain>
    </source>
</reference>
<reference evidence="11" key="3">
    <citation type="journal article" date="2002" name="Biochem. Biophys. Res. Commun.">
        <title>The hormonogenic tyrosine 5 of porcine thyroglobulin is sulfated.</title>
        <authorList>
            <person name="Venot N."/>
            <person name="Nlend M.-C."/>
            <person name="Cauvi D."/>
            <person name="Chabaud O."/>
        </authorList>
    </citation>
    <scope>PROTEIN SEQUENCE OF 20-26</scope>
    <scope>SULFATION AT TYR-24</scope>
    <scope>SUBCELLULAR LOCATION</scope>
    <scope>TISSUE SPECIFICITY</scope>
</reference>
<reference evidence="11" key="4">
    <citation type="journal article" date="1967" name="J. Biol. Chem.">
        <title>Purification and iodinating activity of hog thyroid peroxidase.</title>
        <authorList>
            <person name="Coval M.L."/>
            <person name="Taurog A."/>
        </authorList>
    </citation>
    <scope>IODINATION</scope>
</reference>
<reference evidence="11" key="5">
    <citation type="journal article" date="1981" name="J. Biol. Chem.">
        <title>Thyroid hormone synthesis in thyroglobulin. The mechanism of the coupling reaction.</title>
        <authorList>
            <person name="Gavaret J.M."/>
            <person name="Cahnmann H.J."/>
            <person name="Nunez J."/>
        </authorList>
    </citation>
    <scope>FUNCTION</scope>
</reference>
<reference evidence="11" key="6">
    <citation type="journal article" date="2000" name="J. Cell Sci.">
        <title>Cathepsin K in thyroid epithelial cells: sequence, localization and possible function in extracellular proteolysis of thyroglobulin.</title>
        <authorList>
            <person name="Tepel C."/>
            <person name="Broemme D."/>
            <person name="Herzog V."/>
            <person name="Brix K."/>
        </authorList>
    </citation>
    <scope>TISSUE SPECIFICITY</scope>
    <scope>PROTEOLYTIC CLEAVAGE</scope>
    <source>
        <tissue>Thyroid</tissue>
    </source>
</reference>
<dbReference type="EMBL" id="GQ261999">
    <property type="protein sequence ID" value="ACY66900.1"/>
    <property type="molecule type" value="mRNA"/>
</dbReference>
<dbReference type="EMBL" id="AEMK02000022">
    <property type="status" value="NOT_ANNOTATED_CDS"/>
    <property type="molecule type" value="Genomic_DNA"/>
</dbReference>
<dbReference type="RefSeq" id="NP_001161890.1">
    <property type="nucleotide sequence ID" value="NM_001168418.1"/>
</dbReference>
<dbReference type="SMR" id="F1RRV3"/>
<dbReference type="FunCoup" id="F1RRV3">
    <property type="interactions" value="383"/>
</dbReference>
<dbReference type="STRING" id="9823.ENSSSCP00000068892"/>
<dbReference type="ESTHER" id="pig-d1kkb3">
    <property type="family name" value="Thyroglobulin"/>
</dbReference>
<dbReference type="MEROPS" id="S09.978"/>
<dbReference type="GlyCosmos" id="F1RRV3">
    <property type="glycosylation" value="15 sites, No reported glycans"/>
</dbReference>
<dbReference type="GlyGen" id="F1RRV3">
    <property type="glycosylation" value="15 sites"/>
</dbReference>
<dbReference type="PaxDb" id="9823-ENSSSCP00000006358"/>
<dbReference type="PeptideAtlas" id="F1RRV3"/>
<dbReference type="GeneID" id="100156471"/>
<dbReference type="KEGG" id="ssc:100156471"/>
<dbReference type="CTD" id="7038"/>
<dbReference type="eggNOG" id="KOG1214">
    <property type="taxonomic scope" value="Eukaryota"/>
</dbReference>
<dbReference type="InParanoid" id="F1RRV3"/>
<dbReference type="OMA" id="SIYVPQC"/>
<dbReference type="OrthoDB" id="6409105at2759"/>
<dbReference type="TreeFam" id="TF351833"/>
<dbReference type="Proteomes" id="UP000008227">
    <property type="component" value="Unplaced"/>
</dbReference>
<dbReference type="Proteomes" id="UP000314985">
    <property type="component" value="Unplaced"/>
</dbReference>
<dbReference type="Proteomes" id="UP000694570">
    <property type="component" value="Unplaced"/>
</dbReference>
<dbReference type="Proteomes" id="UP000694571">
    <property type="component" value="Unplaced"/>
</dbReference>
<dbReference type="Proteomes" id="UP000694720">
    <property type="component" value="Unplaced"/>
</dbReference>
<dbReference type="Proteomes" id="UP000694722">
    <property type="component" value="Unplaced"/>
</dbReference>
<dbReference type="Proteomes" id="UP000694723">
    <property type="component" value="Unplaced"/>
</dbReference>
<dbReference type="Proteomes" id="UP000694724">
    <property type="component" value="Unplaced"/>
</dbReference>
<dbReference type="Proteomes" id="UP000694725">
    <property type="component" value="Unplaced"/>
</dbReference>
<dbReference type="Proteomes" id="UP000694726">
    <property type="component" value="Unplaced"/>
</dbReference>
<dbReference type="Proteomes" id="UP000694727">
    <property type="component" value="Unplaced"/>
</dbReference>
<dbReference type="Proteomes" id="UP000694728">
    <property type="component" value="Unplaced"/>
</dbReference>
<dbReference type="GO" id="GO:0005615">
    <property type="term" value="C:extracellular space"/>
    <property type="evidence" value="ECO:0000314"/>
    <property type="project" value="UniProtKB"/>
</dbReference>
<dbReference type="GO" id="GO:0005179">
    <property type="term" value="F:hormone activity"/>
    <property type="evidence" value="ECO:0007669"/>
    <property type="project" value="UniProtKB-KW"/>
</dbReference>
<dbReference type="GO" id="GO:0042802">
    <property type="term" value="F:identical protein binding"/>
    <property type="evidence" value="ECO:0000314"/>
    <property type="project" value="UniProtKB"/>
</dbReference>
<dbReference type="GO" id="GO:0042446">
    <property type="term" value="P:hormone biosynthetic process"/>
    <property type="evidence" value="ECO:0007669"/>
    <property type="project" value="UniProtKB-KW"/>
</dbReference>
<dbReference type="GO" id="GO:0006590">
    <property type="term" value="P:thyroid hormone generation"/>
    <property type="evidence" value="ECO:0000314"/>
    <property type="project" value="UniProtKB"/>
</dbReference>
<dbReference type="CDD" id="cd00191">
    <property type="entry name" value="TY"/>
    <property type="match status" value="7"/>
</dbReference>
<dbReference type="FunFam" id="4.10.800.10:FF:000004">
    <property type="entry name" value="SPARC-related modular calcium-binding protein 1"/>
    <property type="match status" value="1"/>
</dbReference>
<dbReference type="FunFam" id="2.10.50.10:FF:000047">
    <property type="entry name" value="Thyroglobulin"/>
    <property type="match status" value="1"/>
</dbReference>
<dbReference type="FunFam" id="3.40.50.1820:FF:000127">
    <property type="entry name" value="Thyroglobulin"/>
    <property type="match status" value="1"/>
</dbReference>
<dbReference type="FunFam" id="4.10.800.10:FF:000011">
    <property type="entry name" value="Thyroglobulin"/>
    <property type="match status" value="2"/>
</dbReference>
<dbReference type="FunFam" id="4.10.800.10:FF:000012">
    <property type="entry name" value="Thyroglobulin"/>
    <property type="match status" value="1"/>
</dbReference>
<dbReference type="FunFam" id="4.10.800.10:FF:000013">
    <property type="entry name" value="Thyroglobulin"/>
    <property type="match status" value="1"/>
</dbReference>
<dbReference type="FunFam" id="4.10.800.10:FF:000016">
    <property type="entry name" value="Thyroglobulin"/>
    <property type="match status" value="1"/>
</dbReference>
<dbReference type="Gene3D" id="3.40.50.1820">
    <property type="entry name" value="alpha/beta hydrolase"/>
    <property type="match status" value="1"/>
</dbReference>
<dbReference type="Gene3D" id="4.10.800.10">
    <property type="entry name" value="Thyroglobulin type-1"/>
    <property type="match status" value="10"/>
</dbReference>
<dbReference type="Gene3D" id="2.10.50.10">
    <property type="entry name" value="Tumor Necrosis Factor Receptor, subunit A, domain 2"/>
    <property type="match status" value="1"/>
</dbReference>
<dbReference type="InterPro" id="IPR029058">
    <property type="entry name" value="AB_hydrolase_fold"/>
</dbReference>
<dbReference type="InterPro" id="IPR002018">
    <property type="entry name" value="CarbesteraseB"/>
</dbReference>
<dbReference type="InterPro" id="IPR019819">
    <property type="entry name" value="Carboxylesterase_B_CS"/>
</dbReference>
<dbReference type="InterPro" id="IPR052001">
    <property type="entry name" value="MHC-II_Gamma/Thyroglobulin"/>
</dbReference>
<dbReference type="InterPro" id="IPR000716">
    <property type="entry name" value="Thyroglobulin_1"/>
</dbReference>
<dbReference type="InterPro" id="IPR036857">
    <property type="entry name" value="Thyroglobulin_1_sf"/>
</dbReference>
<dbReference type="InterPro" id="IPR011641">
    <property type="entry name" value="Tyr-kin_ephrin_A/B_rcpt-like"/>
</dbReference>
<dbReference type="PANTHER" id="PTHR14093">
    <property type="entry name" value="HLA CLASS II GAMMA CHAIN"/>
    <property type="match status" value="1"/>
</dbReference>
<dbReference type="PANTHER" id="PTHR14093:SF19">
    <property type="entry name" value="THYROGLOBULIN"/>
    <property type="match status" value="1"/>
</dbReference>
<dbReference type="Pfam" id="PF00135">
    <property type="entry name" value="COesterase"/>
    <property type="match status" value="1"/>
</dbReference>
<dbReference type="Pfam" id="PF07699">
    <property type="entry name" value="Ephrin_rec_like"/>
    <property type="match status" value="1"/>
</dbReference>
<dbReference type="Pfam" id="PF00086">
    <property type="entry name" value="Thyroglobulin_1"/>
    <property type="match status" value="12"/>
</dbReference>
<dbReference type="SMART" id="SM01411">
    <property type="entry name" value="Ephrin_rec_like"/>
    <property type="match status" value="1"/>
</dbReference>
<dbReference type="SMART" id="SM00211">
    <property type="entry name" value="TY"/>
    <property type="match status" value="10"/>
</dbReference>
<dbReference type="SUPFAM" id="SSF53474">
    <property type="entry name" value="alpha/beta-Hydrolases"/>
    <property type="match status" value="1"/>
</dbReference>
<dbReference type="SUPFAM" id="SSF57610">
    <property type="entry name" value="Thyroglobulin type-1 domain"/>
    <property type="match status" value="11"/>
</dbReference>
<dbReference type="PROSITE" id="PS00941">
    <property type="entry name" value="CARBOXYLESTERASE_B_2"/>
    <property type="match status" value="1"/>
</dbReference>
<dbReference type="PROSITE" id="PS00484">
    <property type="entry name" value="THYROGLOBULIN_1_1"/>
    <property type="match status" value="8"/>
</dbReference>
<dbReference type="PROSITE" id="PS51162">
    <property type="entry name" value="THYROGLOBULIN_1_2"/>
    <property type="match status" value="11"/>
</dbReference>
<organism evidence="14">
    <name type="scientific">Sus scrofa</name>
    <name type="common">Pig</name>
    <dbReference type="NCBI Taxonomy" id="9823"/>
    <lineage>
        <taxon>Eukaryota</taxon>
        <taxon>Metazoa</taxon>
        <taxon>Chordata</taxon>
        <taxon>Craniata</taxon>
        <taxon>Vertebrata</taxon>
        <taxon>Euteleostomi</taxon>
        <taxon>Mammalia</taxon>
        <taxon>Eutheria</taxon>
        <taxon>Laurasiatheria</taxon>
        <taxon>Artiodactyla</taxon>
        <taxon>Suina</taxon>
        <taxon>Suidae</taxon>
        <taxon>Sus</taxon>
    </lineage>
</organism>
<feature type="signal peptide" evidence="9">
    <location>
        <begin position="1"/>
        <end position="19"/>
    </location>
</feature>
<feature type="chain" id="PRO_5012700411" description="Thyroglobulin" evidence="3">
    <location>
        <begin position="20"/>
        <end position="2692"/>
    </location>
</feature>
<feature type="domain" description="Thyroglobulin type-1 1" evidence="5">
    <location>
        <begin position="31"/>
        <end position="92"/>
    </location>
</feature>
<feature type="domain" description="Thyroglobulin type-1 2" evidence="5">
    <location>
        <begin position="93"/>
        <end position="160"/>
    </location>
</feature>
<feature type="domain" description="Thyroglobulin type-1 3" evidence="5">
    <location>
        <begin position="161"/>
        <end position="248"/>
    </location>
</feature>
<feature type="domain" description="Thyroglobulin type-1 4" evidence="5">
    <location>
        <begin position="298"/>
        <end position="358"/>
    </location>
</feature>
<feature type="domain" description="Thyroglobulin type-1 5" evidence="5">
    <location>
        <begin position="606"/>
        <end position="659"/>
    </location>
</feature>
<feature type="domain" description="Thyroglobulin type-1 6" evidence="5">
    <location>
        <begin position="660"/>
        <end position="727"/>
    </location>
</feature>
<feature type="domain" description="Thyroglobulin type-1 7" evidence="5">
    <location>
        <begin position="728"/>
        <end position="923"/>
    </location>
</feature>
<feature type="domain" description="Thyroglobulin type-1 8" evidence="5">
    <location>
        <begin position="1021"/>
        <end position="1079"/>
    </location>
</feature>
<feature type="domain" description="Thyroglobulin type-1 9" evidence="5">
    <location>
        <begin position="1088"/>
        <end position="1147"/>
    </location>
</feature>
<feature type="domain" description="Thyroglobulin type-1 10" evidence="5">
    <location>
        <begin position="1148"/>
        <end position="1212"/>
    </location>
</feature>
<feature type="repeat" description="Type II" evidence="2">
    <location>
        <begin position="1389"/>
        <end position="1402"/>
    </location>
</feature>
<feature type="repeat" description="Type II" evidence="2">
    <location>
        <begin position="1403"/>
        <end position="1419"/>
    </location>
</feature>
<feature type="repeat" description="Type II" evidence="2">
    <location>
        <begin position="1420"/>
        <end position="1436"/>
    </location>
</feature>
<feature type="domain" description="Thyroglobulin type-1 11" evidence="5">
    <location>
        <begin position="1444"/>
        <end position="1498"/>
    </location>
</feature>
<feature type="repeat" description="Type IIIA" evidence="2">
    <location>
        <begin position="1535"/>
        <end position="1655"/>
    </location>
</feature>
<feature type="repeat" description="Type IIIB" evidence="2">
    <location>
        <begin position="1656"/>
        <end position="1823"/>
    </location>
</feature>
<feature type="repeat" description="Type IIIA" evidence="2">
    <location>
        <begin position="1824"/>
        <end position="1926"/>
    </location>
</feature>
<feature type="repeat" description="Type IIIB" evidence="2">
    <location>
        <begin position="1927"/>
        <end position="2060"/>
    </location>
</feature>
<feature type="repeat" description="Type IIIA" evidence="2">
    <location>
        <begin position="2061"/>
        <end position="2118"/>
    </location>
</feature>
<feature type="region of interest" description="Cholinesterase-like (ChEL)" evidence="1">
    <location>
        <begin position="2119"/>
        <end position="2692"/>
    </location>
</feature>
<feature type="region of interest" description="Disordered" evidence="6">
    <location>
        <begin position="2658"/>
        <end position="2692"/>
    </location>
</feature>
<feature type="compositionally biased region" description="Acidic residues" evidence="6">
    <location>
        <begin position="2658"/>
        <end position="2671"/>
    </location>
</feature>
<feature type="modified residue" description="Iodotyrosine; alternate" evidence="2">
    <location>
        <position position="24"/>
    </location>
</feature>
<feature type="modified residue" description="Sulfotyrosine; alternate" evidence="9">
    <location>
        <position position="24"/>
    </location>
</feature>
<feature type="modified residue" description="Thyroxine; alternate" evidence="2">
    <location>
        <position position="24"/>
    </location>
</feature>
<feature type="modified residue" description="Triiodothyronine; alternate" evidence="2">
    <location>
        <position position="24"/>
    </location>
</feature>
<feature type="modified residue" description="Iodotyrosine" evidence="2">
    <location>
        <position position="108"/>
    </location>
</feature>
<feature type="modified residue" description="Diiodotyrosine; alternate" evidence="2">
    <location>
        <position position="149"/>
    </location>
</feature>
<feature type="modified residue" description="Iodotyrosine; alternate" evidence="2">
    <location>
        <position position="149"/>
    </location>
</feature>
<feature type="modified residue" description="Iodotyrosine" evidence="2">
    <location>
        <position position="234"/>
    </location>
</feature>
<feature type="modified residue" description="Iodotyrosine" evidence="2">
    <location>
        <position position="258"/>
    </location>
</feature>
<feature type="modified residue" description="Diiodotyrosine; alternate" evidence="2">
    <location>
        <position position="705"/>
    </location>
</feature>
<feature type="modified residue" description="Iodotyrosine; alternate" evidence="2">
    <location>
        <position position="705"/>
    </location>
</feature>
<feature type="modified residue" description="Thyroxine; alternate" evidence="2">
    <location>
        <position position="705"/>
    </location>
</feature>
<feature type="modified residue" description="Triiodothyronine; alternate" evidence="2">
    <location>
        <position position="705"/>
    </location>
</feature>
<feature type="modified residue" description="Iodotyrosine" evidence="2">
    <location>
        <position position="786"/>
    </location>
</feature>
<feature type="modified residue" description="Diiodotyrosine; alternate" evidence="2">
    <location>
        <position position="868"/>
    </location>
</feature>
<feature type="modified residue" description="Iodotyrosine; alternate" evidence="2">
    <location>
        <position position="868"/>
    </location>
</feature>
<feature type="modified residue" description="Diiodotyrosine" evidence="2">
    <location>
        <position position="885"/>
    </location>
</feature>
<feature type="modified residue" description="Diiodotyrosine; alternate" evidence="2">
    <location>
        <position position="994"/>
    </location>
</feature>
<feature type="modified residue" description="Iodotyrosine; alternate" evidence="2">
    <location>
        <position position="994"/>
    </location>
</feature>
<feature type="modified residue" description="Iodotyrosine" evidence="2">
    <location>
        <position position="1241"/>
    </location>
</feature>
<feature type="modified residue" description="Thyroxine" evidence="2">
    <location>
        <position position="1241"/>
    </location>
</feature>
<feature type="modified residue" description="Diiodotyrosine; alternate" evidence="2">
    <location>
        <position position="1400"/>
    </location>
</feature>
<feature type="modified residue" description="Iodotyrosine; alternate" evidence="2">
    <location>
        <position position="1400"/>
    </location>
</feature>
<feature type="modified residue" description="Iodotyrosine" evidence="2">
    <location>
        <position position="2115"/>
    </location>
</feature>
<feature type="modified residue" description="Thyroxine" evidence="2">
    <location>
        <position position="2467"/>
    </location>
</feature>
<feature type="modified residue" description="Diiodotyrosine; alternate" evidence="2">
    <location>
        <position position="2500"/>
    </location>
</feature>
<feature type="modified residue" description="Iodotyrosine; alternate" evidence="2">
    <location>
        <position position="2500"/>
    </location>
</feature>
<feature type="modified residue" description="Thyroxine; alternate" evidence="2">
    <location>
        <position position="2500"/>
    </location>
</feature>
<feature type="modified residue" description="Triiodothyronine; alternate" evidence="2">
    <location>
        <position position="2500"/>
    </location>
</feature>
<feature type="modified residue" description="Iodotyrosine" evidence="2">
    <location>
        <position position="2514"/>
    </location>
</feature>
<feature type="modified residue" description="Iodotyrosine" evidence="2">
    <location>
        <position position="2544"/>
    </location>
</feature>
<feature type="modified residue" description="Diiodotyrosine" evidence="2">
    <location>
        <position position="2624"/>
    </location>
</feature>
<feature type="modified residue" description="Diiodotyrosine; alternate" evidence="2">
    <location>
        <position position="2690"/>
    </location>
</feature>
<feature type="modified residue" description="Iodotyrosine; alternate" evidence="2">
    <location>
        <position position="2690"/>
    </location>
</feature>
<feature type="modified residue" description="Thyroxine; alternate" evidence="2">
    <location>
        <position position="2690"/>
    </location>
</feature>
<feature type="modified residue" description="Triiodothyronine; alternate" evidence="2">
    <location>
        <position position="2690"/>
    </location>
</feature>
<feature type="glycosylation site" description="N-linked (GlcNAc...) asparagine" evidence="4">
    <location>
        <position position="110"/>
    </location>
</feature>
<feature type="glycosylation site" description="N-linked (GlcNAc...) asparagine" evidence="4">
    <location>
        <position position="198"/>
    </location>
</feature>
<feature type="glycosylation site" description="N-linked (GlcNAc...) asparagine" evidence="4">
    <location>
        <position position="485"/>
    </location>
</feature>
<feature type="glycosylation site" description="N-linked (GlcNAc...) asparagine" evidence="4">
    <location>
        <position position="497"/>
    </location>
</feature>
<feature type="glycosylation site" description="N-linked (GlcNAc...) asparagine" evidence="4">
    <location>
        <position position="546"/>
    </location>
</feature>
<feature type="glycosylation site" description="N-linked (GlcNAc...) asparagine" evidence="3">
    <location>
        <position position="749"/>
    </location>
</feature>
<feature type="glycosylation site" description="N-linked (GlcNAc...) asparagine" evidence="4">
    <location>
        <position position="855"/>
    </location>
</feature>
<feature type="glycosylation site" description="N-linked (GlcNAc...) asparagine" evidence="4">
    <location>
        <position position="949"/>
    </location>
</feature>
<feature type="glycosylation site" description="N-linked (GlcNAc...) asparagine" evidence="4">
    <location>
        <position position="1142"/>
    </location>
</feature>
<feature type="glycosylation site" description="N-linked (GlcNAc...) asparagine" evidence="4">
    <location>
        <position position="1296"/>
    </location>
</feature>
<feature type="glycosylation site" description="N-linked (GlcNAc...) asparagine" evidence="4">
    <location>
        <position position="1384"/>
    </location>
</feature>
<feature type="glycosylation site" description="N-linked (GlcNAc...) asparagine" evidence="4">
    <location>
        <position position="1800"/>
    </location>
</feature>
<feature type="glycosylation site" description="N-linked (GlcNAc...) asparagine" evidence="4">
    <location>
        <position position="1944"/>
    </location>
</feature>
<feature type="glycosylation site" description="N-linked (GlcNAc...) asparagine" evidence="4">
    <location>
        <position position="2181"/>
    </location>
</feature>
<feature type="glycosylation site" description="N-linked (GlcNAc...) asparagine" evidence="4">
    <location>
        <position position="2226"/>
    </location>
</feature>
<feature type="disulfide bond" evidence="5">
    <location>
        <begin position="34"/>
        <end position="52"/>
    </location>
</feature>
<feature type="disulfide bond" evidence="5">
    <location>
        <begin position="63"/>
        <end position="70"/>
    </location>
</feature>
<feature type="disulfide bond" evidence="5">
    <location>
        <begin position="72"/>
        <end position="92"/>
    </location>
</feature>
<feature type="disulfide bond" evidence="5">
    <location>
        <begin position="96"/>
        <end position="120"/>
    </location>
</feature>
<feature type="disulfide bond" evidence="5">
    <location>
        <begin position="131"/>
        <end position="138"/>
    </location>
</feature>
<feature type="disulfide bond" evidence="5">
    <location>
        <begin position="140"/>
        <end position="160"/>
    </location>
</feature>
<feature type="disulfide bond" evidence="5">
    <location>
        <begin position="164"/>
        <end position="183"/>
    </location>
</feature>
<feature type="disulfide bond" evidence="5">
    <location>
        <begin position="194"/>
        <end position="235"/>
    </location>
</feature>
<feature type="disulfide bond" evidence="5">
    <location>
        <begin position="301"/>
        <end position="319"/>
    </location>
</feature>
<feature type="disulfide bond" evidence="5">
    <location>
        <begin position="330"/>
        <end position="336"/>
    </location>
</feature>
<feature type="disulfide bond" evidence="5">
    <location>
        <begin position="338"/>
        <end position="358"/>
    </location>
</feature>
<feature type="disulfide bond" evidence="2">
    <location>
        <begin position="364"/>
        <end position="621"/>
    </location>
</feature>
<feature type="disulfide bond" evidence="2">
    <location>
        <begin position="408"/>
        <end position="609"/>
    </location>
</feature>
<feature type="disulfide bond" evidence="5">
    <location>
        <begin position="632"/>
        <end position="637"/>
    </location>
</feature>
<feature type="disulfide bond" evidence="5">
    <location>
        <begin position="639"/>
        <end position="659"/>
    </location>
</feature>
<feature type="disulfide bond" evidence="5">
    <location>
        <begin position="663"/>
        <end position="688"/>
    </location>
</feature>
<feature type="disulfide bond" evidence="5">
    <location>
        <begin position="699"/>
        <end position="704"/>
    </location>
</feature>
<feature type="disulfide bond" evidence="5">
    <location>
        <begin position="706"/>
        <end position="727"/>
    </location>
</feature>
<feature type="disulfide bond" evidence="5">
    <location>
        <begin position="731"/>
        <end position="764"/>
    </location>
</feature>
<feature type="disulfide bond" evidence="5">
    <location>
        <begin position="775"/>
        <end position="900"/>
    </location>
</feature>
<feature type="disulfide bond" evidence="5">
    <location>
        <begin position="902"/>
        <end position="923"/>
    </location>
</feature>
<feature type="disulfide bond" evidence="2">
    <location>
        <begin position="927"/>
        <end position="1033"/>
    </location>
</feature>
<feature type="disulfide bond" evidence="5">
    <location>
        <begin position="1044"/>
        <end position="1051"/>
    </location>
</feature>
<feature type="disulfide bond" evidence="5">
    <location>
        <begin position="1053"/>
        <end position="1079"/>
    </location>
</feature>
<feature type="disulfide bond" evidence="5">
    <location>
        <begin position="1128"/>
        <end position="1147"/>
    </location>
</feature>
<feature type="disulfide bond" evidence="5">
    <location>
        <begin position="1151"/>
        <end position="1171"/>
    </location>
</feature>
<feature type="disulfide bond" evidence="5">
    <location>
        <begin position="1183"/>
        <end position="1190"/>
    </location>
</feature>
<feature type="disulfide bond" evidence="5">
    <location>
        <begin position="1192"/>
        <end position="1212"/>
    </location>
</feature>
<feature type="disulfide bond" evidence="2">
    <location>
        <begin position="1237"/>
        <end position="1287"/>
    </location>
</feature>
<feature type="disulfide bond" evidence="2">
    <location>
        <begin position="1262"/>
        <end position="1278"/>
    </location>
</feature>
<feature type="disulfide bond" evidence="2">
    <location>
        <begin position="1372"/>
        <end position="1392"/>
    </location>
</feature>
<feature type="disulfide bond" evidence="2">
    <location>
        <begin position="1395"/>
        <end position="1406"/>
    </location>
</feature>
<feature type="disulfide bond" evidence="2">
    <location>
        <begin position="1409"/>
        <end position="1423"/>
    </location>
</feature>
<feature type="disulfide bond" evidence="2">
    <location>
        <begin position="1426"/>
        <end position="1443"/>
    </location>
</feature>
<feature type="disulfide bond" evidence="5">
    <location>
        <begin position="1447"/>
        <end position="1456"/>
    </location>
</feature>
<feature type="disulfide bond" evidence="5">
    <location>
        <begin position="1476"/>
        <end position="1498"/>
    </location>
</feature>
<feature type="disulfide bond" evidence="2">
    <location>
        <begin position="1535"/>
        <end position="1559"/>
    </location>
</feature>
<feature type="disulfide bond" evidence="2">
    <location>
        <begin position="1539"/>
        <end position="1545"/>
    </location>
</feature>
<feature type="disulfide bond" evidence="2">
    <location>
        <begin position="1571"/>
        <end position="1594"/>
    </location>
</feature>
<feature type="disulfide bond" evidence="2">
    <location>
        <begin position="1656"/>
        <end position="1681"/>
    </location>
</feature>
<feature type="disulfide bond" evidence="2">
    <location>
        <begin position="1660"/>
        <end position="1666"/>
    </location>
</feature>
<feature type="disulfide bond" evidence="2">
    <location>
        <begin position="1665"/>
        <end position="1766"/>
    </location>
</feature>
<feature type="disulfide bond" evidence="2">
    <location>
        <begin position="1692"/>
        <end position="1709"/>
    </location>
</feature>
<feature type="disulfide bond" evidence="2">
    <location>
        <begin position="1824"/>
        <end position="1850"/>
    </location>
</feature>
<feature type="disulfide bond" evidence="2">
    <location>
        <begin position="1828"/>
        <end position="1835"/>
    </location>
</feature>
<feature type="disulfide bond" evidence="2">
    <location>
        <begin position="1859"/>
        <end position="1870"/>
    </location>
</feature>
<feature type="disulfide bond" evidence="2">
    <location>
        <begin position="1927"/>
        <end position="1955"/>
    </location>
</feature>
<feature type="disulfide bond" evidence="2">
    <location>
        <begin position="1931"/>
        <end position="1937"/>
    </location>
</feature>
<feature type="disulfide bond" evidence="2">
    <location>
        <begin position="1936"/>
        <end position="2007"/>
    </location>
</feature>
<feature type="disulfide bond" evidence="2">
    <location>
        <begin position="1966"/>
        <end position="1979"/>
    </location>
</feature>
<feature type="disulfide bond" evidence="2">
    <location>
        <begin position="2061"/>
        <end position="2085"/>
    </location>
</feature>
<feature type="disulfide bond" evidence="2">
    <location>
        <begin position="2065"/>
        <end position="2071"/>
    </location>
</feature>
<feature type="disulfide bond" evidence="2">
    <location>
        <begin position="2094"/>
        <end position="2103"/>
    </location>
</feature>
<feature type="disulfide bond" evidence="2">
    <location>
        <begin position="2518"/>
        <end position="2642"/>
    </location>
</feature>
<feature type="sequence conflict" description="In Ref. 1; ACY66900." evidence="11" ref="1">
    <original>L</original>
    <variation>P</variation>
    <location>
        <position position="11"/>
    </location>
</feature>
<feature type="sequence conflict" description="In Ref. 1; ACY66900." evidence="11" ref="1">
    <original>S</original>
    <variation>C</variation>
    <location>
        <position position="163"/>
    </location>
</feature>
<feature type="sequence conflict" description="In Ref. 1; ACY66900." evidence="11" ref="1">
    <original>F</original>
    <variation>L</variation>
    <location>
        <position position="204"/>
    </location>
</feature>
<feature type="sequence conflict" description="In Ref. 1; ACY66900." evidence="11" ref="1">
    <original>G</original>
    <variation>E</variation>
    <location>
        <position position="247"/>
    </location>
</feature>
<feature type="sequence conflict" description="In Ref. 1; ACY66900." evidence="11" ref="1">
    <original>L</original>
    <variation>P</variation>
    <location>
        <position position="335"/>
    </location>
</feature>
<feature type="sequence conflict" description="In Ref. 1; ACY66900." evidence="11" ref="1">
    <original>E</original>
    <variation>K</variation>
    <location>
        <position position="360"/>
    </location>
</feature>
<feature type="sequence conflict" description="In Ref. 1; ACY66900." evidence="11" ref="1">
    <original>S</original>
    <variation>L</variation>
    <location>
        <position position="366"/>
    </location>
</feature>
<feature type="sequence conflict" description="In Ref. 1; ACY66900." evidence="11" ref="1">
    <original>G</original>
    <variation>A</variation>
    <location>
        <position position="395"/>
    </location>
</feature>
<feature type="sequence conflict" description="In Ref. 1; ACY66900." evidence="11" ref="1">
    <original>R</original>
    <variation>Q</variation>
    <location>
        <position position="452"/>
    </location>
</feature>
<feature type="sequence conflict" description="In Ref. 1; ACY66900." evidence="11" ref="1">
    <original>L</original>
    <variation>V</variation>
    <location>
        <position position="821"/>
    </location>
</feature>
<feature type="sequence conflict" description="In Ref. 1; ACY66900." evidence="11" ref="1">
    <original>G</original>
    <variation>R</variation>
    <location>
        <position position="861"/>
    </location>
</feature>
<feature type="sequence conflict" description="In Ref. 1; ACY66900." evidence="11" ref="1">
    <original>T</original>
    <variation>S</variation>
    <location>
        <position position="1077"/>
    </location>
</feature>
<feature type="sequence conflict" description="In Ref. 1; ACY66900." evidence="11" ref="1">
    <original>M</original>
    <variation>T</variation>
    <location>
        <position position="1137"/>
    </location>
</feature>
<feature type="sequence conflict" description="In Ref. 1; ACY66900." evidence="11" ref="1">
    <original>N</original>
    <variation>D</variation>
    <location>
        <position position="1360"/>
    </location>
</feature>
<feature type="sequence conflict" description="In Ref. 1; ACY66900." evidence="11" ref="1">
    <original>I</original>
    <variation>K</variation>
    <location>
        <position position="1524"/>
    </location>
</feature>
<feature type="sequence conflict" description="In Ref. 1; ACY66900." evidence="11" ref="1">
    <original>R</original>
    <variation>L</variation>
    <location>
        <position position="1541"/>
    </location>
</feature>
<feature type="sequence conflict" description="In Ref. 1; ACY66900." evidence="11" ref="1">
    <original>S</original>
    <variation>G</variation>
    <location>
        <position position="1546"/>
    </location>
</feature>
<feature type="sequence conflict" description="In Ref. 1; ACY66900." evidence="11" ref="1">
    <original>G</original>
    <variation>R</variation>
    <location>
        <position position="1590"/>
    </location>
</feature>
<feature type="sequence conflict" description="In Ref. 1; ACY66900." evidence="11" ref="1">
    <original>A</original>
    <variation>P</variation>
    <location>
        <position position="1605"/>
    </location>
</feature>
<feature type="sequence conflict" description="In Ref. 1; ACY66900." evidence="11" ref="1">
    <original>IGQ</original>
    <variation>VGR</variation>
    <location>
        <begin position="1619"/>
        <end position="1621"/>
    </location>
</feature>
<feature type="sequence conflict" description="In Ref. 1; ACY66900." evidence="11" ref="1">
    <original>L</original>
    <variation>F</variation>
    <location>
        <position position="1657"/>
    </location>
</feature>
<feature type="sequence conflict" description="In Ref. 1; ACY66900." evidence="11" ref="1">
    <original>V</original>
    <variation>M</variation>
    <location>
        <position position="1712"/>
    </location>
</feature>
<feature type="sequence conflict" description="In Ref. 1; ACY66900." evidence="11" ref="1">
    <original>R</original>
    <variation>H</variation>
    <location>
        <position position="1719"/>
    </location>
</feature>
<feature type="sequence conflict" description="In Ref. 1; ACY66900." evidence="11" ref="1">
    <original>T</original>
    <variation>S</variation>
    <location>
        <position position="2189"/>
    </location>
</feature>
<feature type="sequence conflict" description="In Ref. 1; ACY66900." evidence="11" ref="1">
    <original>Y</original>
    <variation>C</variation>
    <location>
        <position position="2379"/>
    </location>
</feature>
<feature type="sequence conflict" description="In Ref. 1; ACY66900." evidence="11" ref="1">
    <original>G</original>
    <variation>R</variation>
    <location>
        <position position="2384"/>
    </location>
</feature>
<feature type="sequence conflict" description="In Ref. 1; ACY66900." evidence="11" ref="1">
    <original>NDAQMQ</original>
    <variation>HDAQSK</variation>
    <location>
        <begin position="2390"/>
        <end position="2395"/>
    </location>
</feature>
<feature type="sequence conflict" description="In Ref. 1; ACY66900." evidence="11" ref="1">
    <original>L</original>
    <variation>S</variation>
    <location>
        <position position="2650"/>
    </location>
</feature>
<feature type="sequence conflict" description="In Ref. 1; ACY66900." evidence="11" ref="1">
    <original>G</original>
    <variation>E</variation>
    <location>
        <position position="2662"/>
    </location>
</feature>
<feature type="sequence conflict" description="In Ref. 1; ACY66900." evidence="11" ref="1">
    <original>T</original>
    <variation>A</variation>
    <location>
        <position position="2676"/>
    </location>
</feature>
<sequence>MALALWVFALLGSACLVSANIFEYQVDAQPLRPCELQRERAFLKRADYVPQCAEDGSFQTVQCKKDGGSCWCVDADGREVPGSRQPGRPVACLSFCQLQKQQILLSSYINSTATSYLPQCQDSGAYAPVQCDVRREQCWCVDAEGMEVYGTRRLGRPARCPGSCEIRNRRLLHGVGDKSPPQCSADGTFLPVQCKFVNTTDMMFFDLVHSYNRFPDAFVTFSSFRSRFPEVSGYCHCADSQGRELAGTGLELLLDEIYDTVFAGLDLASSFTETTLYRILQRRFLAVQLVTSGRFRCPTKCEVERFAATSFGHPYVPSCGRDGEYQAGQCQQEGLCWCVDAQGQEIPGTRRPSEPLSCAEGQSCPSERRRALSRLHLGPSGYSGQRGSFLAAERGPVSQTVPSFAASCPLPLKELFVESGILQPVVQGQKKEVTAATESLLKEGLRGIFPSRELARLALQFTANPKRLQQNLFGGRFLANVGQFNLSGALGTRGTFNFSHFFQQLGLPGFQKRQALADPAKSLSVGLDSNPATEAPEALKMGVAMNKTVVGSFGFEVNLQENRNALTFLSSLLELPEFLLFLQHAISVPEDIARDLGDVMEMALSSQGCEQTPGSLFVPSCTAEGSYEDVQCFAGECWCVDARGRELAGSRARGGRPRCPTACEKQRERMQSLLGRQPAGSSVFVPSCTREGHFLPVQCFSSDCYCVDADGQPIPGTRTAPGEPKQCPTPCQLQAEQAFLGTVRGLISNPSEPPVLSSIYIPQCSASGQWRRVQCDGPPEQAFEWYERWGAQSRSGQELTPAELLMKIMSYREAASGSFRLFIQNLYEAGQQGIFPGLARYSSLQDVPLAVLEGNLTQATGNILLEPYLFWQILNGQLPRYPGPYSDFSAPLAHLDLRSCWCVDEAGRKLEGTQTEPSKVPACPGSCEEVKLRVLQFIKEAEEIVMVSNSSQFPLGESFLAAKGIRLTDEELALPPLSPSRETFLEKFLSGSDYAIRLAAQSTFSFYQRRRVALSDAPRTSGPLQPYPYVPQCDALGSWEPVQCHAATGHCWCVDGEGAYLPASLAARSPQVLQCPTPCETSRVRGLLSAWKQAGSQVRPSPKDLFIPACTETGEFARLQASEASTWCVDPASGEAMPPGTNSSAPCPGLCEVLQRGVPSRRASPGTTPACRAEDGGFAPVQCDPAQGSCWCVLGSGEEVPGTRVAGSQPACERPQLWQTIQTRGQFQLQLPPGKVCSADYAGLLPTFQVVILDELTARGFCRIQVTTARTPVSIPVCDDSTVRVGCLSLDRLGVNVTWTLRLEDAPPASLPDLRDIEEALAGKDLVGRFADLIQSGTFQLHLDSRTFPADPSIHFLQGNSLGTSPRTRFGCVEGSRQVPATSNTSQDPLGCVRCPEGSYFQEEQCIPCPAGFYQEQTGSLACAPCPAGTTTTSVGAFSQTHCVTACQRDEAGLQCDQDGQYRASQRDRASGKAFCVDSEGRRLPWSETQAPLVDAQCLMMRKFEKLPESKVIFTADVAVLGSIVPDSESSLMQCLADCARDEACSFLTVSLEGSEGSCDFYAWTSDNIACTSSGQEEDALGTSKATSLGSLTCQVKVRPGDGVAPAVYLKKGQEFATIGQKRFEQTGFQNALSGLYSPVVFSASGASLTEAHLFCLLACDRDSCCDGFILTQVQGGPIICGLLSSPDVLLCHVRDWRDPSEAQADATCPGVTYDQDSRQGTLRLGGQEFKSLTPREGARDTFTSFQQVYLWKDSDMGSRSESMGCRRDMQPRPESPEETDLTAELFSPVDLNQVIVSENRSLPSQQHRLFKHLFSLQQAHLWCLSRCVQEPSFCQLAEITDSSPLYLTCTLYPEAQVCDDVMEASPRGCRRILPRRPNALFQRRVVLQDRVKNFYTRLPFQKLTGLSIRHKVPMADKAISSGFFECERLCDVDPCCTGFGFLNVSQLKGGEVTCLTLNSLGLQTCSEENGGSWRLLACGSPDTEVRTYPFGWYQKPAVQNDAPSFCPSAALPPVPEKVALDSWQPLPPSSVVVDPSIRNFDVAHISTAAVGDFSAARERCLLECSRHQACLVTTLQTRPGAVRCMFYADTQSCTHSLQAQNCQLLLREEATHIYRKPDIPLPGLGSSAPTVTIATHGQLLGTSQAIQLGASWKQVDQFLGVPYAAPPLAESRFRAPEPLNWTGTWDATKPRASCWQPGIRPATAPGVSEDCLYLSVFVPQSLTPNSSVLVFFHNGAEGPLAMAVDGSFLAAVGNLIVVTASYRTGVFGFLSSGSSEVSGNWGLLDQVAALTWVQTHIGVFGGDPRRVALAADRGGADVAGIHLLTSRATNSRLFRRAVLMGGSVLSPAAVIRPDRAQQQAAALAKEVGCPPRPSQKWYPASAGACQPPNDAQMQLLAVSGPFHYWGPVVDGQLLREAPARALQRPPRAKLDLLIGSSQDDGLIDRAKAVKRFEESQGRTSSKTAFYQALQNSLGGEAGDPGVQAAATWYYSLEHDTDDYASFSRALEAATRDYFIICPVIDMASHWARTARGNVFMYHAPESYSHGSLELLADVRYAFGLPFYPAYEGQFTQEEKSLSLKIMQYFSNFVRSGNPNYPHEFSRKAPEFAAPWPDFVPGDGAESYKELSVLLPNRQGLKKADCSFWSKYILSLKASADEAEDGPLAESEEEDRPGLTEDLLGLPELASKSYSK</sequence>
<evidence type="ECO:0000250" key="1">
    <source>
        <dbReference type="UniProtKB" id="O08710"/>
    </source>
</evidence>
<evidence type="ECO:0000250" key="2">
    <source>
        <dbReference type="UniProtKB" id="P01266"/>
    </source>
</evidence>
<evidence type="ECO:0000255" key="3"/>
<evidence type="ECO:0000255" key="4">
    <source>
        <dbReference type="PROSITE-ProRule" id="PRU00498"/>
    </source>
</evidence>
<evidence type="ECO:0000255" key="5">
    <source>
        <dbReference type="PROSITE-ProRule" id="PRU00500"/>
    </source>
</evidence>
<evidence type="ECO:0000256" key="6">
    <source>
        <dbReference type="SAM" id="MobiDB-lite"/>
    </source>
</evidence>
<evidence type="ECO:0000269" key="7">
    <source>
    </source>
</evidence>
<evidence type="ECO:0000269" key="8">
    <source>
    </source>
</evidence>
<evidence type="ECO:0000269" key="9">
    <source>
    </source>
</evidence>
<evidence type="ECO:0000269" key="10">
    <source>
    </source>
</evidence>
<evidence type="ECO:0000305" key="11"/>
<evidence type="ECO:0000312" key="12">
    <source>
        <dbReference type="EMBL" id="ACY66900.1"/>
    </source>
</evidence>
<evidence type="ECO:0000312" key="13">
    <source>
        <dbReference type="EMBL" id="AEMK02000022"/>
    </source>
</evidence>
<evidence type="ECO:0000312" key="14">
    <source>
        <dbReference type="Proteomes" id="UP000008227"/>
    </source>
</evidence>